<keyword id="KW-0963">Cytoplasm</keyword>
<keyword id="KW-0255">Endonuclease</keyword>
<keyword id="KW-0378">Hydrolase</keyword>
<keyword id="KW-0464">Manganese</keyword>
<keyword id="KW-0479">Metal-binding</keyword>
<keyword id="KW-0540">Nuclease</keyword>
<keyword id="KW-1185">Reference proteome</keyword>
<proteinExistence type="inferred from homology"/>
<protein>
    <recommendedName>
        <fullName evidence="1">Ribonuclease HII</fullName>
        <shortName evidence="1">RNase HII</shortName>
        <ecNumber evidence="1">3.1.26.4</ecNumber>
    </recommendedName>
</protein>
<organism>
    <name type="scientific">Coxiella burnetii (strain RSA 493 / Nine Mile phase I)</name>
    <dbReference type="NCBI Taxonomy" id="227377"/>
    <lineage>
        <taxon>Bacteria</taxon>
        <taxon>Pseudomonadati</taxon>
        <taxon>Pseudomonadota</taxon>
        <taxon>Gammaproteobacteria</taxon>
        <taxon>Legionellales</taxon>
        <taxon>Coxiellaceae</taxon>
        <taxon>Coxiella</taxon>
    </lineage>
</organism>
<evidence type="ECO:0000255" key="1">
    <source>
        <dbReference type="HAMAP-Rule" id="MF_00052"/>
    </source>
</evidence>
<evidence type="ECO:0000255" key="2">
    <source>
        <dbReference type="PROSITE-ProRule" id="PRU01319"/>
    </source>
</evidence>
<sequence>MDAPFAKTPSNLLIAGVDEAGRGPLAGPVITAAVILNPEIIIEGLADSKKLSLKKREELYEKIITNCKAFAIARADVEEIDRLNIFRATLLAMQRAINQLSIQPDKVLIDGHCCPDLPYETQAIVQGDQNVPAISAASILAKVTRDREMLKYDAQYPDYGFAIHKGYGTKAHLAAIHRFGITPVHRKSFEPVRQLKLFIPEE</sequence>
<dbReference type="EC" id="3.1.26.4" evidence="1"/>
<dbReference type="EMBL" id="AE016828">
    <property type="protein sequence ID" value="AAO90842.1"/>
    <property type="molecule type" value="Genomic_DNA"/>
</dbReference>
<dbReference type="RefSeq" id="NP_820328.1">
    <property type="nucleotide sequence ID" value="NC_002971.4"/>
</dbReference>
<dbReference type="RefSeq" id="WP_005770967.1">
    <property type="nucleotide sequence ID" value="NZ_CDBG01000001.1"/>
</dbReference>
<dbReference type="SMR" id="Q83BZ8"/>
<dbReference type="STRING" id="227377.CBU_1339"/>
<dbReference type="EnsemblBacteria" id="AAO90842">
    <property type="protein sequence ID" value="AAO90842"/>
    <property type="gene ID" value="CBU_1339"/>
</dbReference>
<dbReference type="GeneID" id="1209245"/>
<dbReference type="KEGG" id="cbu:CBU_1339"/>
<dbReference type="PATRIC" id="fig|227377.7.peg.1331"/>
<dbReference type="eggNOG" id="COG0164">
    <property type="taxonomic scope" value="Bacteria"/>
</dbReference>
<dbReference type="HOGENOM" id="CLU_036532_3_2_6"/>
<dbReference type="OrthoDB" id="9803420at2"/>
<dbReference type="Proteomes" id="UP000002671">
    <property type="component" value="Chromosome"/>
</dbReference>
<dbReference type="GO" id="GO:0005737">
    <property type="term" value="C:cytoplasm"/>
    <property type="evidence" value="ECO:0007669"/>
    <property type="project" value="UniProtKB-SubCell"/>
</dbReference>
<dbReference type="GO" id="GO:0032299">
    <property type="term" value="C:ribonuclease H2 complex"/>
    <property type="evidence" value="ECO:0000318"/>
    <property type="project" value="GO_Central"/>
</dbReference>
<dbReference type="GO" id="GO:0030145">
    <property type="term" value="F:manganese ion binding"/>
    <property type="evidence" value="ECO:0007669"/>
    <property type="project" value="UniProtKB-UniRule"/>
</dbReference>
<dbReference type="GO" id="GO:0003723">
    <property type="term" value="F:RNA binding"/>
    <property type="evidence" value="ECO:0007669"/>
    <property type="project" value="InterPro"/>
</dbReference>
<dbReference type="GO" id="GO:0004523">
    <property type="term" value="F:RNA-DNA hybrid ribonuclease activity"/>
    <property type="evidence" value="ECO:0000318"/>
    <property type="project" value="GO_Central"/>
</dbReference>
<dbReference type="GO" id="GO:0043137">
    <property type="term" value="P:DNA replication, removal of RNA primer"/>
    <property type="evidence" value="ECO:0000318"/>
    <property type="project" value="GO_Central"/>
</dbReference>
<dbReference type="GO" id="GO:0006298">
    <property type="term" value="P:mismatch repair"/>
    <property type="evidence" value="ECO:0000318"/>
    <property type="project" value="GO_Central"/>
</dbReference>
<dbReference type="CDD" id="cd07182">
    <property type="entry name" value="RNase_HII_bacteria_HII_like"/>
    <property type="match status" value="1"/>
</dbReference>
<dbReference type="FunFam" id="3.30.420.10:FF:000006">
    <property type="entry name" value="Ribonuclease HII"/>
    <property type="match status" value="1"/>
</dbReference>
<dbReference type="Gene3D" id="3.30.420.10">
    <property type="entry name" value="Ribonuclease H-like superfamily/Ribonuclease H"/>
    <property type="match status" value="1"/>
</dbReference>
<dbReference type="HAMAP" id="MF_00052_B">
    <property type="entry name" value="RNase_HII_B"/>
    <property type="match status" value="1"/>
</dbReference>
<dbReference type="InterPro" id="IPR022898">
    <property type="entry name" value="RNase_HII"/>
</dbReference>
<dbReference type="InterPro" id="IPR001352">
    <property type="entry name" value="RNase_HII/HIII"/>
</dbReference>
<dbReference type="InterPro" id="IPR024567">
    <property type="entry name" value="RNase_HII/HIII_dom"/>
</dbReference>
<dbReference type="InterPro" id="IPR012337">
    <property type="entry name" value="RNaseH-like_sf"/>
</dbReference>
<dbReference type="InterPro" id="IPR036397">
    <property type="entry name" value="RNaseH_sf"/>
</dbReference>
<dbReference type="NCBIfam" id="NF000594">
    <property type="entry name" value="PRK00015.1-1"/>
    <property type="match status" value="1"/>
</dbReference>
<dbReference type="NCBIfam" id="NF000595">
    <property type="entry name" value="PRK00015.1-3"/>
    <property type="match status" value="1"/>
</dbReference>
<dbReference type="NCBIfam" id="NF000596">
    <property type="entry name" value="PRK00015.1-4"/>
    <property type="match status" value="1"/>
</dbReference>
<dbReference type="PANTHER" id="PTHR10954">
    <property type="entry name" value="RIBONUCLEASE H2 SUBUNIT A"/>
    <property type="match status" value="1"/>
</dbReference>
<dbReference type="PANTHER" id="PTHR10954:SF18">
    <property type="entry name" value="RIBONUCLEASE HII"/>
    <property type="match status" value="1"/>
</dbReference>
<dbReference type="Pfam" id="PF01351">
    <property type="entry name" value="RNase_HII"/>
    <property type="match status" value="1"/>
</dbReference>
<dbReference type="SUPFAM" id="SSF53098">
    <property type="entry name" value="Ribonuclease H-like"/>
    <property type="match status" value="1"/>
</dbReference>
<dbReference type="PROSITE" id="PS51975">
    <property type="entry name" value="RNASE_H_2"/>
    <property type="match status" value="1"/>
</dbReference>
<gene>
    <name evidence="1" type="primary">rnhB</name>
    <name type="ordered locus">CBU_1339</name>
</gene>
<name>RNH2_COXBU</name>
<accession>Q83BZ8</accession>
<reference key="1">
    <citation type="journal article" date="2003" name="Proc. Natl. Acad. Sci. U.S.A.">
        <title>Complete genome sequence of the Q-fever pathogen, Coxiella burnetii.</title>
        <authorList>
            <person name="Seshadri R."/>
            <person name="Paulsen I.T."/>
            <person name="Eisen J.A."/>
            <person name="Read T.D."/>
            <person name="Nelson K.E."/>
            <person name="Nelson W.C."/>
            <person name="Ward N.L."/>
            <person name="Tettelin H."/>
            <person name="Davidsen T.M."/>
            <person name="Beanan M.J."/>
            <person name="DeBoy R.T."/>
            <person name="Daugherty S.C."/>
            <person name="Brinkac L.M."/>
            <person name="Madupu R."/>
            <person name="Dodson R.J."/>
            <person name="Khouri H.M."/>
            <person name="Lee K.H."/>
            <person name="Carty H.A."/>
            <person name="Scanlan D."/>
            <person name="Heinzen R.A."/>
            <person name="Thompson H.A."/>
            <person name="Samuel J.E."/>
            <person name="Fraser C.M."/>
            <person name="Heidelberg J.F."/>
        </authorList>
    </citation>
    <scope>NUCLEOTIDE SEQUENCE [LARGE SCALE GENOMIC DNA]</scope>
    <source>
        <strain>RSA 493 / Nine Mile phase I</strain>
    </source>
</reference>
<comment type="function">
    <text evidence="1">Endonuclease that specifically degrades the RNA of RNA-DNA hybrids.</text>
</comment>
<comment type="catalytic activity">
    <reaction evidence="1">
        <text>Endonucleolytic cleavage to 5'-phosphomonoester.</text>
        <dbReference type="EC" id="3.1.26.4"/>
    </reaction>
</comment>
<comment type="cofactor">
    <cofactor evidence="1">
        <name>Mn(2+)</name>
        <dbReference type="ChEBI" id="CHEBI:29035"/>
    </cofactor>
    <cofactor evidence="1">
        <name>Mg(2+)</name>
        <dbReference type="ChEBI" id="CHEBI:18420"/>
    </cofactor>
    <text evidence="1">Manganese or magnesium. Binds 1 divalent metal ion per monomer in the absence of substrate. May bind a second metal ion after substrate binding.</text>
</comment>
<comment type="subcellular location">
    <subcellularLocation>
        <location evidence="1">Cytoplasm</location>
    </subcellularLocation>
</comment>
<comment type="similarity">
    <text evidence="1">Belongs to the RNase HII family.</text>
</comment>
<feature type="chain" id="PRO_0000111570" description="Ribonuclease HII">
    <location>
        <begin position="1"/>
        <end position="202"/>
    </location>
</feature>
<feature type="domain" description="RNase H type-2" evidence="2">
    <location>
        <begin position="12"/>
        <end position="201"/>
    </location>
</feature>
<feature type="binding site" evidence="1">
    <location>
        <position position="18"/>
    </location>
    <ligand>
        <name>a divalent metal cation</name>
        <dbReference type="ChEBI" id="CHEBI:60240"/>
    </ligand>
</feature>
<feature type="binding site" evidence="1">
    <location>
        <position position="19"/>
    </location>
    <ligand>
        <name>a divalent metal cation</name>
        <dbReference type="ChEBI" id="CHEBI:60240"/>
    </ligand>
</feature>
<feature type="binding site" evidence="1">
    <location>
        <position position="110"/>
    </location>
    <ligand>
        <name>a divalent metal cation</name>
        <dbReference type="ChEBI" id="CHEBI:60240"/>
    </ligand>
</feature>